<keyword id="KW-1185">Reference proteome</keyword>
<sequence>MSSPAKMYDIEILPGGFRPARPSMDVAGHIVKTPESFTVLPRGMGVCKTKIEIKRVPFGGAIYVYNIESLLLQQRISTMGGVVAGKVDELVIYFANFSDVPVKFTRGDPVAQLVLAPASIESATVKSYVGESVKPIVGEDDLIKKYQVKLIDLDKGGSGVETITLADNEYGVFTELPDAVDKFNDVIPRVYTVPEQIINVGTKDFMQPIVMWKDDYDAVKNMDNLKGLIKGLMNVDPAFQPLLKINDGRMPLAKLDVRRYYNRETL</sequence>
<dbReference type="EMBL" id="AY509253">
    <property type="protein sequence ID" value="AAS00919.1"/>
    <property type="molecule type" value="Genomic_DNA"/>
</dbReference>
<dbReference type="RefSeq" id="YP_024572.1">
    <property type="nucleotide sequence ID" value="NC_005881.2"/>
</dbReference>
<dbReference type="SMR" id="Q6R7J6"/>
<dbReference type="KEGG" id="vg:2948191"/>
<dbReference type="Proteomes" id="UP000007021">
    <property type="component" value="Segment"/>
</dbReference>
<dbReference type="Gene3D" id="2.70.40.10">
    <property type="match status" value="1"/>
</dbReference>
<dbReference type="InterPro" id="IPR036157">
    <property type="entry name" value="dUTPase-like_sf"/>
</dbReference>
<dbReference type="SUPFAM" id="SSF51283">
    <property type="entry name" value="dUTPase-like"/>
    <property type="match status" value="1"/>
</dbReference>
<organism>
    <name type="scientific">Ostreid herpesvirus 1 (isolate France)</name>
    <name type="common">OsHV-1</name>
    <name type="synonym">Pacific oyster herpesvirus</name>
    <dbReference type="NCBI Taxonomy" id="654903"/>
    <lineage>
        <taxon>Viruses</taxon>
        <taxon>Duplodnaviria</taxon>
        <taxon>Heunggongvirae</taxon>
        <taxon>Peploviricota</taxon>
        <taxon>Herviviricetes</taxon>
        <taxon>Herpesvirales</taxon>
        <taxon>Malacoherpesviridae</taxon>
        <taxon>Ostreavirus</taxon>
        <taxon>Ostreavirus ostreidmalaco1</taxon>
        <taxon>Ostreid herpesvirus 1</taxon>
    </lineage>
</organism>
<gene>
    <name type="ORF">ORF27</name>
</gene>
<organismHost>
    <name type="scientific">Magallana gigas</name>
    <name type="common">Pacific oyster</name>
    <name type="synonym">Crassostrea gigas</name>
    <dbReference type="NCBI Taxonomy" id="29159"/>
</organismHost>
<organismHost>
    <name type="scientific">Pecten maximus</name>
    <name type="common">King scallop</name>
    <name type="synonym">Pilgrim's clam</name>
    <dbReference type="NCBI Taxonomy" id="6579"/>
</organismHost>
<proteinExistence type="predicted"/>
<reference key="1">
    <citation type="journal article" date="2005" name="J. Gen. Virol.">
        <title>A novel class of herpesvirus with bivalve hosts.</title>
        <authorList>
            <person name="Davison A.J."/>
            <person name="Trus B.L."/>
            <person name="Cheng N."/>
            <person name="Steven A.C."/>
            <person name="Watson M.S."/>
            <person name="Cunningham C."/>
            <person name="Le Deuff R.M."/>
            <person name="Renault T."/>
        </authorList>
    </citation>
    <scope>NUCLEOTIDE SEQUENCE [LARGE SCALE GENOMIC DNA]</scope>
</reference>
<feature type="chain" id="PRO_0000385058" description="Uncharacterized protein ORF27">
    <location>
        <begin position="1"/>
        <end position="266"/>
    </location>
</feature>
<protein>
    <recommendedName>
        <fullName>Uncharacterized protein ORF27</fullName>
    </recommendedName>
</protein>
<accession>Q6R7J6</accession>
<name>Y027_OSHVF</name>